<evidence type="ECO:0000305" key="1"/>
<evidence type="ECO:0000312" key="2">
    <source>
        <dbReference type="FlyBase" id="FBgn0002626"/>
    </source>
</evidence>
<protein>
    <recommendedName>
        <fullName evidence="1">Large ribosomal subunit protein eL32</fullName>
    </recommendedName>
    <alternativeName>
        <fullName>60S ribosomal protein L32</fullName>
    </alternativeName>
    <alternativeName>
        <fullName>Ribosomal protein 49</fullName>
    </alternativeName>
</protein>
<proteinExistence type="evidence at protein level"/>
<comment type="alternative products">
    <event type="alternative splicing"/>
    <isoform>
        <id>P04359-1</id>
        <name evidence="2">A</name>
        <name>B</name>
        <name evidence="2">D</name>
        <sequence type="displayed"/>
    </isoform>
    <isoform>
        <id>P04359-2</id>
        <name evidence="2">C</name>
        <sequence type="described" ref="VSP_058151"/>
    </isoform>
</comment>
<comment type="similarity">
    <text evidence="1">Belongs to the eukaryotic ribosomal protein eL32 family.</text>
</comment>
<accession>P04359</accession>
<accession>A4V3M7</accession>
<accession>B7Z0S1</accession>
<accession>O01386</accession>
<accession>Q8IMJ6</accession>
<accession>Q9VAB2</accession>
<dbReference type="EMBL" id="X00848">
    <property type="protein sequence ID" value="CAA25404.1"/>
    <property type="molecule type" value="Genomic_DNA"/>
</dbReference>
<dbReference type="EMBL" id="U92431">
    <property type="protein sequence ID" value="AAB51389.1"/>
    <property type="molecule type" value="mRNA"/>
</dbReference>
<dbReference type="EMBL" id="Y13939">
    <property type="protein sequence ID" value="CAA74278.1"/>
    <property type="molecule type" value="Genomic_DNA"/>
</dbReference>
<dbReference type="EMBL" id="AE014297">
    <property type="protein sequence ID" value="AAF57001.1"/>
    <property type="molecule type" value="Genomic_DNA"/>
</dbReference>
<dbReference type="EMBL" id="AE014297">
    <property type="protein sequence ID" value="AAN14210.1"/>
    <property type="molecule type" value="Genomic_DNA"/>
</dbReference>
<dbReference type="EMBL" id="AE014297">
    <property type="protein sequence ID" value="AAN14211.1"/>
    <property type="molecule type" value="Genomic_DNA"/>
</dbReference>
<dbReference type="EMBL" id="AE014297">
    <property type="protein sequence ID" value="ACL83583.1"/>
    <property type="molecule type" value="Genomic_DNA"/>
</dbReference>
<dbReference type="EMBL" id="AY070656">
    <property type="protein sequence ID" value="AAL48127.1"/>
    <property type="molecule type" value="mRNA"/>
</dbReference>
<dbReference type="EMBL" id="BT011442">
    <property type="protein sequence ID" value="AAR99100.1"/>
    <property type="molecule type" value="mRNA"/>
</dbReference>
<dbReference type="PIR" id="A02830">
    <property type="entry name" value="R5FF49"/>
</dbReference>
<dbReference type="RefSeq" id="NP_001138127.1">
    <molecule id="P04359-1"/>
    <property type="nucleotide sequence ID" value="NM_001144655.3"/>
</dbReference>
<dbReference type="RefSeq" id="NP_524582.1">
    <molecule id="P04359-1"/>
    <property type="nucleotide sequence ID" value="NM_079843.4"/>
</dbReference>
<dbReference type="RefSeq" id="NP_733339.1">
    <molecule id="P04359-2"/>
    <property type="nucleotide sequence ID" value="NM_170460.2"/>
</dbReference>
<dbReference type="RefSeq" id="NP_733340.1">
    <molecule id="P04359-1"/>
    <property type="nucleotide sequence ID" value="NM_170461.3"/>
</dbReference>
<dbReference type="PDB" id="4V6W">
    <property type="method" value="EM"/>
    <property type="resolution" value="6.00 A"/>
    <property type="chains" value="Ce=1-134"/>
</dbReference>
<dbReference type="PDB" id="6XU6">
    <property type="method" value="EM"/>
    <property type="resolution" value="3.50 A"/>
    <property type="chains" value="Ce=1-132"/>
</dbReference>
<dbReference type="PDB" id="6XU7">
    <property type="method" value="EM"/>
    <property type="resolution" value="4.90 A"/>
    <property type="chains" value="Ce=1-132"/>
</dbReference>
<dbReference type="PDB" id="6XU8">
    <property type="method" value="EM"/>
    <property type="resolution" value="3.00 A"/>
    <property type="chains" value="Ce=1-132"/>
</dbReference>
<dbReference type="PDBsum" id="4V6W"/>
<dbReference type="PDBsum" id="6XU6"/>
<dbReference type="PDBsum" id="6XU7"/>
<dbReference type="PDBsum" id="6XU8"/>
<dbReference type="EMDB" id="EMD-10622"/>
<dbReference type="EMDB" id="EMD-10623"/>
<dbReference type="EMDB" id="EMD-10624"/>
<dbReference type="SMR" id="P04359"/>
<dbReference type="BioGRID" id="68429">
    <property type="interactions" value="98"/>
</dbReference>
<dbReference type="FunCoup" id="P04359">
    <property type="interactions" value="1760"/>
</dbReference>
<dbReference type="IntAct" id="P04359">
    <property type="interactions" value="13"/>
</dbReference>
<dbReference type="STRING" id="7227.FBpp0084959"/>
<dbReference type="PaxDb" id="7227-FBpp0084959"/>
<dbReference type="DNASU" id="43573"/>
<dbReference type="EnsemblMetazoa" id="FBtr0085592">
    <molecule id="P04359-1"/>
    <property type="protein sequence ID" value="FBpp0084958"/>
    <property type="gene ID" value="FBgn0002626"/>
</dbReference>
<dbReference type="EnsemblMetazoa" id="FBtr0085593">
    <molecule id="P04359-2"/>
    <property type="protein sequence ID" value="FBpp0084959"/>
    <property type="gene ID" value="FBgn0002626"/>
</dbReference>
<dbReference type="EnsemblMetazoa" id="FBtr0085594">
    <molecule id="P04359-1"/>
    <property type="protein sequence ID" value="FBpp0084960"/>
    <property type="gene ID" value="FBgn0002626"/>
</dbReference>
<dbReference type="EnsemblMetazoa" id="FBtr0114555">
    <molecule id="P04359-1"/>
    <property type="protein sequence ID" value="FBpp0113047"/>
    <property type="gene ID" value="FBgn0002626"/>
</dbReference>
<dbReference type="GeneID" id="43573"/>
<dbReference type="KEGG" id="dme:Dmel_CG7939"/>
<dbReference type="AGR" id="FB:FBgn0002626"/>
<dbReference type="CTD" id="6161"/>
<dbReference type="FlyBase" id="FBgn0002626">
    <property type="gene designation" value="RpL32"/>
</dbReference>
<dbReference type="VEuPathDB" id="VectorBase:FBgn0002626"/>
<dbReference type="eggNOG" id="KOG0878">
    <property type="taxonomic scope" value="Eukaryota"/>
</dbReference>
<dbReference type="GeneTree" id="ENSGT00940000158890"/>
<dbReference type="HOGENOM" id="CLU_071479_4_1_1"/>
<dbReference type="InParanoid" id="P04359"/>
<dbReference type="OMA" id="HPSGYEE"/>
<dbReference type="OrthoDB" id="268693at2759"/>
<dbReference type="PhylomeDB" id="P04359"/>
<dbReference type="Reactome" id="R-DME-156827">
    <property type="pathway name" value="L13a-mediated translational silencing of Ceruloplasmin expression"/>
</dbReference>
<dbReference type="Reactome" id="R-DME-1799339">
    <property type="pathway name" value="SRP-dependent cotranslational protein targeting to membrane"/>
</dbReference>
<dbReference type="Reactome" id="R-DME-72689">
    <property type="pathway name" value="Formation of a pool of free 40S subunits"/>
</dbReference>
<dbReference type="Reactome" id="R-DME-72706">
    <property type="pathway name" value="GTP hydrolysis and joining of the 60S ribosomal subunit"/>
</dbReference>
<dbReference type="Reactome" id="R-DME-975956">
    <property type="pathway name" value="Nonsense Mediated Decay (NMD) independent of the Exon Junction Complex (EJC)"/>
</dbReference>
<dbReference type="Reactome" id="R-DME-975957">
    <property type="pathway name" value="Nonsense Mediated Decay (NMD) enhanced by the Exon Junction Complex (EJC)"/>
</dbReference>
<dbReference type="SignaLink" id="P04359"/>
<dbReference type="BioGRID-ORCS" id="43573">
    <property type="hits" value="1 hit in 1 CRISPR screen"/>
</dbReference>
<dbReference type="ChiTaRS" id="RpL32">
    <property type="organism name" value="fly"/>
</dbReference>
<dbReference type="GenomeRNAi" id="43573"/>
<dbReference type="PRO" id="PR:P04359"/>
<dbReference type="Proteomes" id="UP000000803">
    <property type="component" value="Chromosome 3R"/>
</dbReference>
<dbReference type="Bgee" id="FBgn0002626">
    <property type="expression patterns" value="Expressed in adult Malpighian tubule (Drosophila) and 293 other cell types or tissues"/>
</dbReference>
<dbReference type="ExpressionAtlas" id="P04359">
    <property type="expression patterns" value="baseline and differential"/>
</dbReference>
<dbReference type="GO" id="GO:0005737">
    <property type="term" value="C:cytoplasm"/>
    <property type="evidence" value="ECO:0000314"/>
    <property type="project" value="FlyBase"/>
</dbReference>
<dbReference type="GO" id="GO:0022625">
    <property type="term" value="C:cytosolic large ribosomal subunit"/>
    <property type="evidence" value="ECO:0000318"/>
    <property type="project" value="GO_Central"/>
</dbReference>
<dbReference type="GO" id="GO:0022626">
    <property type="term" value="C:cytosolic ribosome"/>
    <property type="evidence" value="ECO:0000314"/>
    <property type="project" value="FlyBase"/>
</dbReference>
<dbReference type="GO" id="GO:0005730">
    <property type="term" value="C:nucleolus"/>
    <property type="evidence" value="ECO:0000314"/>
    <property type="project" value="FlyBase"/>
</dbReference>
<dbReference type="GO" id="GO:0003735">
    <property type="term" value="F:structural constituent of ribosome"/>
    <property type="evidence" value="ECO:0000314"/>
    <property type="project" value="FlyBase"/>
</dbReference>
<dbReference type="GO" id="GO:0002181">
    <property type="term" value="P:cytoplasmic translation"/>
    <property type="evidence" value="ECO:0000304"/>
    <property type="project" value="FlyBase"/>
</dbReference>
<dbReference type="CDD" id="cd00513">
    <property type="entry name" value="Ribosomal_L32_L32e"/>
    <property type="match status" value="1"/>
</dbReference>
<dbReference type="InterPro" id="IPR001515">
    <property type="entry name" value="Ribosomal_eL32"/>
</dbReference>
<dbReference type="InterPro" id="IPR018263">
    <property type="entry name" value="Ribosomal_eL32_CS"/>
</dbReference>
<dbReference type="InterPro" id="IPR036351">
    <property type="entry name" value="Ribosomal_eL32_sf"/>
</dbReference>
<dbReference type="PANTHER" id="PTHR23413">
    <property type="entry name" value="60S RIBOSOMAL PROTEIN L32 AND DNA-DIRECTED RNA POLYMERASE II, SUBUNIT N"/>
    <property type="match status" value="1"/>
</dbReference>
<dbReference type="PANTHER" id="PTHR23413:SF1">
    <property type="entry name" value="RIBOSOMAL PROTEIN L32"/>
    <property type="match status" value="1"/>
</dbReference>
<dbReference type="Pfam" id="PF01655">
    <property type="entry name" value="Ribosomal_L32e"/>
    <property type="match status" value="1"/>
</dbReference>
<dbReference type="SMART" id="SM01393">
    <property type="entry name" value="Ribosomal_L32e"/>
    <property type="match status" value="1"/>
</dbReference>
<dbReference type="SUPFAM" id="SSF52042">
    <property type="entry name" value="Ribosomal protein L32e"/>
    <property type="match status" value="1"/>
</dbReference>
<dbReference type="PROSITE" id="PS00580">
    <property type="entry name" value="RIBOSOMAL_L32E"/>
    <property type="match status" value="1"/>
</dbReference>
<feature type="chain" id="PRO_0000131128" description="Large ribosomal subunit protein eL32">
    <location>
        <begin position="1"/>
        <end position="134"/>
    </location>
</feature>
<feature type="splice variant" id="VSP_058151" description="In isoform C." evidence="1">
    <original>M</original>
    <variation>MDTAQEASPTCFKM</variation>
    <location>
        <position position="1"/>
    </location>
</feature>
<feature type="sequence conflict" description="In Ref. 1; CAA25404." evidence="1" ref="1">
    <original>H</original>
    <variation>D</variation>
    <location>
        <position position="18"/>
    </location>
</feature>
<feature type="sequence conflict" description="In Ref. 1; CAA25404." evidence="1" ref="1">
    <original>R</original>
    <variation>G</variation>
    <location>
        <position position="45"/>
    </location>
</feature>
<feature type="sequence conflict" description="In Ref. 1; CAA25404." evidence="1" ref="1">
    <original>RVYCGEIAHGVSSKKR</original>
    <variation>PRLLREMPTASPPRS</variation>
    <location>
        <begin position="92"/>
        <end position="107"/>
    </location>
</feature>
<feature type="sequence conflict" description="In Ref. 1; CAA25404." evidence="1" ref="1">
    <original>V</original>
    <variation>I</variation>
    <location>
        <position position="111"/>
    </location>
</feature>
<feature type="sequence conflict" description="In Ref. 1; CAA25404." evidence="1" ref="1">
    <original>VRLTNPNGRLRSQENE</original>
    <variation>LRSPTPTVACVSRRTR</variation>
    <location>
        <begin position="119"/>
        <end position="134"/>
    </location>
</feature>
<sequence>MTIRPAYRPKIVKKRTKHFIRHQSDRYAKLSHKWRKPKGIDNRVRRRFKGQYLMPNIGYGSNKRTRHMLPTGFKKFLVHNVRELEVLLMQNRVYCGEIAHGVSSKKRKEIVERAKQLSVRLTNPNGRLRSQENE</sequence>
<name>RL32_DROME</name>
<gene>
    <name type="primary">RpL32</name>
    <name type="synonym">M(3)99D</name>
    <name type="synonym">rp49</name>
    <name type="ORF">CG7939</name>
</gene>
<reference key="1">
    <citation type="journal article" date="1984" name="Nucleic Acids Res.">
        <title>Sequence, structure, and codon preference of the Drosophila ribosomal protein 49 gene.</title>
        <authorList>
            <person name="O'Connell P."/>
            <person name="Rosbash M."/>
        </authorList>
    </citation>
    <scope>NUCLEOTIDE SEQUENCE [GENOMIC DNA]</scope>
</reference>
<reference key="2">
    <citation type="submission" date="1997-03" db="EMBL/GenBank/DDBJ databases">
        <authorList>
            <person name="McMahill M.S."/>
            <person name="Danielson P.D."/>
            <person name="Fogleman J.C."/>
        </authorList>
    </citation>
    <scope>NUCLEOTIDE SEQUENCE [MRNA] (ISOFORM A)</scope>
    <source>
        <strain>Canton-S</strain>
    </source>
</reference>
<reference key="3">
    <citation type="journal article" date="1998" name="Mol. Phylogenet. Evol.">
        <title>Molecular and chromosomal phylogeny in the obscura group of Drosophila inferred from sequences of the rp49 gene region.</title>
        <authorList>
            <person name="Ramos-Onsins S."/>
            <person name="Segarra C."/>
            <person name="Rozas J."/>
            <person name="Aguade M."/>
        </authorList>
    </citation>
    <scope>NUCLEOTIDE SEQUENCE [GENOMIC DNA]</scope>
    <source>
        <strain>M66</strain>
    </source>
</reference>
<reference key="4">
    <citation type="journal article" date="2000" name="Science">
        <title>The genome sequence of Drosophila melanogaster.</title>
        <authorList>
            <person name="Adams M.D."/>
            <person name="Celniker S.E."/>
            <person name="Holt R.A."/>
            <person name="Evans C.A."/>
            <person name="Gocayne J.D."/>
            <person name="Amanatides P.G."/>
            <person name="Scherer S.E."/>
            <person name="Li P.W."/>
            <person name="Hoskins R.A."/>
            <person name="Galle R.F."/>
            <person name="George R.A."/>
            <person name="Lewis S.E."/>
            <person name="Richards S."/>
            <person name="Ashburner M."/>
            <person name="Henderson S.N."/>
            <person name="Sutton G.G."/>
            <person name="Wortman J.R."/>
            <person name="Yandell M.D."/>
            <person name="Zhang Q."/>
            <person name="Chen L.X."/>
            <person name="Brandon R.C."/>
            <person name="Rogers Y.-H.C."/>
            <person name="Blazej R.G."/>
            <person name="Champe M."/>
            <person name="Pfeiffer B.D."/>
            <person name="Wan K.H."/>
            <person name="Doyle C."/>
            <person name="Baxter E.G."/>
            <person name="Helt G."/>
            <person name="Nelson C.R."/>
            <person name="Miklos G.L.G."/>
            <person name="Abril J.F."/>
            <person name="Agbayani A."/>
            <person name="An H.-J."/>
            <person name="Andrews-Pfannkoch C."/>
            <person name="Baldwin D."/>
            <person name="Ballew R.M."/>
            <person name="Basu A."/>
            <person name="Baxendale J."/>
            <person name="Bayraktaroglu L."/>
            <person name="Beasley E.M."/>
            <person name="Beeson K.Y."/>
            <person name="Benos P.V."/>
            <person name="Berman B.P."/>
            <person name="Bhandari D."/>
            <person name="Bolshakov S."/>
            <person name="Borkova D."/>
            <person name="Botchan M.R."/>
            <person name="Bouck J."/>
            <person name="Brokstein P."/>
            <person name="Brottier P."/>
            <person name="Burtis K.C."/>
            <person name="Busam D.A."/>
            <person name="Butler H."/>
            <person name="Cadieu E."/>
            <person name="Center A."/>
            <person name="Chandra I."/>
            <person name="Cherry J.M."/>
            <person name="Cawley S."/>
            <person name="Dahlke C."/>
            <person name="Davenport L.B."/>
            <person name="Davies P."/>
            <person name="de Pablos B."/>
            <person name="Delcher A."/>
            <person name="Deng Z."/>
            <person name="Mays A.D."/>
            <person name="Dew I."/>
            <person name="Dietz S.M."/>
            <person name="Dodson K."/>
            <person name="Doup L.E."/>
            <person name="Downes M."/>
            <person name="Dugan-Rocha S."/>
            <person name="Dunkov B.C."/>
            <person name="Dunn P."/>
            <person name="Durbin K.J."/>
            <person name="Evangelista C.C."/>
            <person name="Ferraz C."/>
            <person name="Ferriera S."/>
            <person name="Fleischmann W."/>
            <person name="Fosler C."/>
            <person name="Gabrielian A.E."/>
            <person name="Garg N.S."/>
            <person name="Gelbart W.M."/>
            <person name="Glasser K."/>
            <person name="Glodek A."/>
            <person name="Gong F."/>
            <person name="Gorrell J.H."/>
            <person name="Gu Z."/>
            <person name="Guan P."/>
            <person name="Harris M."/>
            <person name="Harris N.L."/>
            <person name="Harvey D.A."/>
            <person name="Heiman T.J."/>
            <person name="Hernandez J.R."/>
            <person name="Houck J."/>
            <person name="Hostin D."/>
            <person name="Houston K.A."/>
            <person name="Howland T.J."/>
            <person name="Wei M.-H."/>
            <person name="Ibegwam C."/>
            <person name="Jalali M."/>
            <person name="Kalush F."/>
            <person name="Karpen G.H."/>
            <person name="Ke Z."/>
            <person name="Kennison J.A."/>
            <person name="Ketchum K.A."/>
            <person name="Kimmel B.E."/>
            <person name="Kodira C.D."/>
            <person name="Kraft C.L."/>
            <person name="Kravitz S."/>
            <person name="Kulp D."/>
            <person name="Lai Z."/>
            <person name="Lasko P."/>
            <person name="Lei Y."/>
            <person name="Levitsky A.A."/>
            <person name="Li J.H."/>
            <person name="Li Z."/>
            <person name="Liang Y."/>
            <person name="Lin X."/>
            <person name="Liu X."/>
            <person name="Mattei B."/>
            <person name="McIntosh T.C."/>
            <person name="McLeod M.P."/>
            <person name="McPherson D."/>
            <person name="Merkulov G."/>
            <person name="Milshina N.V."/>
            <person name="Mobarry C."/>
            <person name="Morris J."/>
            <person name="Moshrefi A."/>
            <person name="Mount S.M."/>
            <person name="Moy M."/>
            <person name="Murphy B."/>
            <person name="Murphy L."/>
            <person name="Muzny D.M."/>
            <person name="Nelson D.L."/>
            <person name="Nelson D.R."/>
            <person name="Nelson K.A."/>
            <person name="Nixon K."/>
            <person name="Nusskern D.R."/>
            <person name="Pacleb J.M."/>
            <person name="Palazzolo M."/>
            <person name="Pittman G.S."/>
            <person name="Pan S."/>
            <person name="Pollard J."/>
            <person name="Puri V."/>
            <person name="Reese M.G."/>
            <person name="Reinert K."/>
            <person name="Remington K."/>
            <person name="Saunders R.D.C."/>
            <person name="Scheeler F."/>
            <person name="Shen H."/>
            <person name="Shue B.C."/>
            <person name="Siden-Kiamos I."/>
            <person name="Simpson M."/>
            <person name="Skupski M.P."/>
            <person name="Smith T.J."/>
            <person name="Spier E."/>
            <person name="Spradling A.C."/>
            <person name="Stapleton M."/>
            <person name="Strong R."/>
            <person name="Sun E."/>
            <person name="Svirskas R."/>
            <person name="Tector C."/>
            <person name="Turner R."/>
            <person name="Venter E."/>
            <person name="Wang A.H."/>
            <person name="Wang X."/>
            <person name="Wang Z.-Y."/>
            <person name="Wassarman D.A."/>
            <person name="Weinstock G.M."/>
            <person name="Weissenbach J."/>
            <person name="Williams S.M."/>
            <person name="Woodage T."/>
            <person name="Worley K.C."/>
            <person name="Wu D."/>
            <person name="Yang S."/>
            <person name="Yao Q.A."/>
            <person name="Ye J."/>
            <person name="Yeh R.-F."/>
            <person name="Zaveri J.S."/>
            <person name="Zhan M."/>
            <person name="Zhang G."/>
            <person name="Zhao Q."/>
            <person name="Zheng L."/>
            <person name="Zheng X.H."/>
            <person name="Zhong F.N."/>
            <person name="Zhong W."/>
            <person name="Zhou X."/>
            <person name="Zhu S.C."/>
            <person name="Zhu X."/>
            <person name="Smith H.O."/>
            <person name="Gibbs R.A."/>
            <person name="Myers E.W."/>
            <person name="Rubin G.M."/>
            <person name="Venter J.C."/>
        </authorList>
    </citation>
    <scope>NUCLEOTIDE SEQUENCE [LARGE SCALE GENOMIC DNA]</scope>
    <source>
        <strain>Berkeley</strain>
    </source>
</reference>
<reference key="5">
    <citation type="journal article" date="2002" name="Genome Biol.">
        <title>Annotation of the Drosophila melanogaster euchromatic genome: a systematic review.</title>
        <authorList>
            <person name="Misra S."/>
            <person name="Crosby M.A."/>
            <person name="Mungall C.J."/>
            <person name="Matthews B.B."/>
            <person name="Campbell K.S."/>
            <person name="Hradecky P."/>
            <person name="Huang Y."/>
            <person name="Kaminker J.S."/>
            <person name="Millburn G.H."/>
            <person name="Prochnik S.E."/>
            <person name="Smith C.D."/>
            <person name="Tupy J.L."/>
            <person name="Whitfield E.J."/>
            <person name="Bayraktaroglu L."/>
            <person name="Berman B.P."/>
            <person name="Bettencourt B.R."/>
            <person name="Celniker S.E."/>
            <person name="de Grey A.D.N.J."/>
            <person name="Drysdale R.A."/>
            <person name="Harris N.L."/>
            <person name="Richter J."/>
            <person name="Russo S."/>
            <person name="Schroeder A.J."/>
            <person name="Shu S.Q."/>
            <person name="Stapleton M."/>
            <person name="Yamada C."/>
            <person name="Ashburner M."/>
            <person name="Gelbart W.M."/>
            <person name="Rubin G.M."/>
            <person name="Lewis S.E."/>
        </authorList>
    </citation>
    <scope>GENOME REANNOTATION</scope>
    <source>
        <strain>Berkeley</strain>
    </source>
</reference>
<reference key="6">
    <citation type="journal article" date="2002" name="Genome Biol.">
        <title>A Drosophila full-length cDNA resource.</title>
        <authorList>
            <person name="Stapleton M."/>
            <person name="Carlson J.W."/>
            <person name="Brokstein P."/>
            <person name="Yu C."/>
            <person name="Champe M."/>
            <person name="George R.A."/>
            <person name="Guarin H."/>
            <person name="Kronmiller B."/>
            <person name="Pacleb J.M."/>
            <person name="Park S."/>
            <person name="Wan K.H."/>
            <person name="Rubin G.M."/>
            <person name="Celniker S.E."/>
        </authorList>
    </citation>
    <scope>NUCLEOTIDE SEQUENCE [LARGE SCALE MRNA] (ISOFORM A)</scope>
    <source>
        <strain>Berkeley</strain>
        <tissue>Head</tissue>
    </source>
</reference>
<reference key="7">
    <citation type="submission" date="2004-01" db="EMBL/GenBank/DDBJ databases">
        <authorList>
            <person name="Stapleton M."/>
            <person name="Carlson J.W."/>
            <person name="Chavez C."/>
            <person name="Frise E."/>
            <person name="George R.A."/>
            <person name="Pacleb J.M."/>
            <person name="Park S."/>
            <person name="Wan K.H."/>
            <person name="Yu C."/>
            <person name="Rubin G.M."/>
            <person name="Celniker S.E."/>
        </authorList>
    </citation>
    <scope>NUCLEOTIDE SEQUENCE [LARGE SCALE MRNA] (ISOFORM C)</scope>
    <source>
        <strain>Berkeley</strain>
        <tissue>Embryo</tissue>
    </source>
</reference>
<reference key="8">
    <citation type="journal article" date="2013" name="Nature">
        <title>Structures of the human and Drosophila 80S ribosome.</title>
        <authorList>
            <person name="Anger A.M."/>
            <person name="Armache J.P."/>
            <person name="Berninghausen O."/>
            <person name="Habeck M."/>
            <person name="Subklewe M."/>
            <person name="Wilson D.N."/>
            <person name="Beckmann R."/>
        </authorList>
    </citation>
    <scope>STRUCTURE BY ELECTRON MICROSCOPY (6.0 ANGSTROMS) OF THE 80S RIBOSOME</scope>
</reference>
<organism>
    <name type="scientific">Drosophila melanogaster</name>
    <name type="common">Fruit fly</name>
    <dbReference type="NCBI Taxonomy" id="7227"/>
    <lineage>
        <taxon>Eukaryota</taxon>
        <taxon>Metazoa</taxon>
        <taxon>Ecdysozoa</taxon>
        <taxon>Arthropoda</taxon>
        <taxon>Hexapoda</taxon>
        <taxon>Insecta</taxon>
        <taxon>Pterygota</taxon>
        <taxon>Neoptera</taxon>
        <taxon>Endopterygota</taxon>
        <taxon>Diptera</taxon>
        <taxon>Brachycera</taxon>
        <taxon>Muscomorpha</taxon>
        <taxon>Ephydroidea</taxon>
        <taxon>Drosophilidae</taxon>
        <taxon>Drosophila</taxon>
        <taxon>Sophophora</taxon>
    </lineage>
</organism>
<keyword id="KW-0002">3D-structure</keyword>
<keyword id="KW-0025">Alternative splicing</keyword>
<keyword id="KW-1185">Reference proteome</keyword>
<keyword id="KW-0687">Ribonucleoprotein</keyword>
<keyword id="KW-0689">Ribosomal protein</keyword>